<keyword id="KW-0687">Ribonucleoprotein</keyword>
<keyword id="KW-0689">Ribosomal protein</keyword>
<sequence length="70" mass="8355">MPAIRVKENEPFEVAMRRFKRAVEKTGLLTELRAREAYEKPTTERKRKKAAAVKRLQKRLRSQQLPPKMY</sequence>
<dbReference type="EMBL" id="CP001050">
    <property type="protein sequence ID" value="ACF31207.1"/>
    <property type="molecule type" value="Genomic_DNA"/>
</dbReference>
<dbReference type="RefSeq" id="WP_002214819.1">
    <property type="nucleotide sequence ID" value="NC_011035.1"/>
</dbReference>
<dbReference type="SMR" id="B4RRF0"/>
<dbReference type="GeneID" id="93386856"/>
<dbReference type="KEGG" id="ngk:NGK_2608"/>
<dbReference type="HOGENOM" id="CLU_159258_1_1_4"/>
<dbReference type="Proteomes" id="UP000002564">
    <property type="component" value="Chromosome"/>
</dbReference>
<dbReference type="GO" id="GO:1990904">
    <property type="term" value="C:ribonucleoprotein complex"/>
    <property type="evidence" value="ECO:0007669"/>
    <property type="project" value="UniProtKB-KW"/>
</dbReference>
<dbReference type="GO" id="GO:0005840">
    <property type="term" value="C:ribosome"/>
    <property type="evidence" value="ECO:0007669"/>
    <property type="project" value="UniProtKB-KW"/>
</dbReference>
<dbReference type="GO" id="GO:0003735">
    <property type="term" value="F:structural constituent of ribosome"/>
    <property type="evidence" value="ECO:0007669"/>
    <property type="project" value="InterPro"/>
</dbReference>
<dbReference type="GO" id="GO:0006412">
    <property type="term" value="P:translation"/>
    <property type="evidence" value="ECO:0007669"/>
    <property type="project" value="UniProtKB-UniRule"/>
</dbReference>
<dbReference type="Gene3D" id="1.20.5.1150">
    <property type="entry name" value="Ribosomal protein S8"/>
    <property type="match status" value="1"/>
</dbReference>
<dbReference type="HAMAP" id="MF_00358">
    <property type="entry name" value="Ribosomal_bS21"/>
    <property type="match status" value="1"/>
</dbReference>
<dbReference type="InterPro" id="IPR001911">
    <property type="entry name" value="Ribosomal_bS21"/>
</dbReference>
<dbReference type="InterPro" id="IPR038380">
    <property type="entry name" value="Ribosomal_bS21_sf"/>
</dbReference>
<dbReference type="NCBIfam" id="TIGR00030">
    <property type="entry name" value="S21p"/>
    <property type="match status" value="1"/>
</dbReference>
<dbReference type="PANTHER" id="PTHR21109">
    <property type="entry name" value="MITOCHONDRIAL 28S RIBOSOMAL PROTEIN S21"/>
    <property type="match status" value="1"/>
</dbReference>
<dbReference type="PANTHER" id="PTHR21109:SF22">
    <property type="entry name" value="SMALL RIBOSOMAL SUBUNIT PROTEIN BS21"/>
    <property type="match status" value="1"/>
</dbReference>
<dbReference type="Pfam" id="PF01165">
    <property type="entry name" value="Ribosomal_S21"/>
    <property type="match status" value="1"/>
</dbReference>
<dbReference type="PRINTS" id="PR00976">
    <property type="entry name" value="RIBOSOMALS21"/>
</dbReference>
<reference key="1">
    <citation type="journal article" date="2008" name="J. Bacteriol.">
        <title>Complete genome sequence of Neisseria gonorrhoeae NCCP11945.</title>
        <authorList>
            <person name="Chung G.T."/>
            <person name="Yoo J.S."/>
            <person name="Oh H.B."/>
            <person name="Lee Y.S."/>
            <person name="Cha S.H."/>
            <person name="Kim S.J."/>
            <person name="Yoo C.K."/>
        </authorList>
    </citation>
    <scope>NUCLEOTIDE SEQUENCE [LARGE SCALE GENOMIC DNA]</scope>
    <source>
        <strain>NCCP11945</strain>
    </source>
</reference>
<feature type="chain" id="PRO_1000120641" description="Small ribosomal subunit protein bS21">
    <location>
        <begin position="1"/>
        <end position="70"/>
    </location>
</feature>
<comment type="similarity">
    <text evidence="1">Belongs to the bacterial ribosomal protein bS21 family.</text>
</comment>
<gene>
    <name evidence="1" type="primary">rpsU</name>
    <name type="ordered locus">NGK_2608</name>
</gene>
<evidence type="ECO:0000255" key="1">
    <source>
        <dbReference type="HAMAP-Rule" id="MF_00358"/>
    </source>
</evidence>
<evidence type="ECO:0000305" key="2"/>
<name>RS21_NEIG2</name>
<organism>
    <name type="scientific">Neisseria gonorrhoeae (strain NCCP11945)</name>
    <dbReference type="NCBI Taxonomy" id="521006"/>
    <lineage>
        <taxon>Bacteria</taxon>
        <taxon>Pseudomonadati</taxon>
        <taxon>Pseudomonadota</taxon>
        <taxon>Betaproteobacteria</taxon>
        <taxon>Neisseriales</taxon>
        <taxon>Neisseriaceae</taxon>
        <taxon>Neisseria</taxon>
    </lineage>
</organism>
<proteinExistence type="inferred from homology"/>
<accession>B4RRF0</accession>
<protein>
    <recommendedName>
        <fullName evidence="1">Small ribosomal subunit protein bS21</fullName>
    </recommendedName>
    <alternativeName>
        <fullName evidence="2">30S ribosomal protein S21</fullName>
    </alternativeName>
</protein>